<organism>
    <name type="scientific">Pectobacterium carotovorum subsp. carotovorum (strain PC1)</name>
    <dbReference type="NCBI Taxonomy" id="561230"/>
    <lineage>
        <taxon>Bacteria</taxon>
        <taxon>Pseudomonadati</taxon>
        <taxon>Pseudomonadota</taxon>
        <taxon>Gammaproteobacteria</taxon>
        <taxon>Enterobacterales</taxon>
        <taxon>Pectobacteriaceae</taxon>
        <taxon>Pectobacterium</taxon>
    </lineage>
</organism>
<protein>
    <recommendedName>
        <fullName evidence="1">NAD-dependent malic enzyme</fullName>
        <shortName evidence="1">NAD-ME</shortName>
        <ecNumber evidence="1">1.1.1.38</ecNumber>
    </recommendedName>
</protein>
<proteinExistence type="inferred from homology"/>
<accession>C6DDS6</accession>
<gene>
    <name evidence="1" type="primary">maeA</name>
    <name type="ordered locus">PC1_1494</name>
</gene>
<reference key="1">
    <citation type="submission" date="2009-07" db="EMBL/GenBank/DDBJ databases">
        <title>Complete sequence of Pectobacterium carotovorum subsp. carotovorum PC1.</title>
        <authorList>
            <consortium name="US DOE Joint Genome Institute"/>
            <person name="Lucas S."/>
            <person name="Copeland A."/>
            <person name="Lapidus A."/>
            <person name="Glavina del Rio T."/>
            <person name="Tice H."/>
            <person name="Bruce D."/>
            <person name="Goodwin L."/>
            <person name="Pitluck S."/>
            <person name="Munk A.C."/>
            <person name="Brettin T."/>
            <person name="Detter J.C."/>
            <person name="Han C."/>
            <person name="Tapia R."/>
            <person name="Larimer F."/>
            <person name="Land M."/>
            <person name="Hauser L."/>
            <person name="Kyrpides N."/>
            <person name="Mikhailova N."/>
            <person name="Balakrishnan V."/>
            <person name="Glasner J."/>
            <person name="Perna N.T."/>
        </authorList>
    </citation>
    <scope>NUCLEOTIDE SEQUENCE [LARGE SCALE GENOMIC DNA]</scope>
    <source>
        <strain>PC1</strain>
    </source>
</reference>
<evidence type="ECO:0000255" key="1">
    <source>
        <dbReference type="HAMAP-Rule" id="MF_01619"/>
    </source>
</evidence>
<sequence length="565" mass="62745">MELEYESKRPLHIPYAGPILLEFPLLNKGSAFTEEERANFNLHGLLPEAVETIEEQAERAWRQYQEFKHDIEKHVYLRNIQDTNETLFYRLLDGHLSEMMPIIYTPTVGEACEHFSDIYRRARGLFISYPNRAHIDDMLQNATKQNVKVIVVTDGERILGLGDQGIGGMGIPIGKLSLYTACGGISPAYTLPVVLDVGTNNPQRLNDPLYMGWRHPRITDDEYYEFVDEFIQAVKRRWPNVLLQFEDFAQKNATPLLNRYRDEICSFNDDIQGTAAVALGSLIAASRAAGTQLRDQTVAFLGAGSAGCGIAEQIIAQMKSEGLSDEEARARVFMVDRFGLLTDKLPNLLDFQSKLVQKSELLANWDCNSDAISLLEVVRNAKPTILIGVSGQPGLFTEEIIREMHKHCARPIVMPLSNPTSRVEARPEDIIRWTEGAALVATGSPFSPVNYQDKVFPIAQCNNSYIFPGIGLGVLASGAKRITDGMLMAASRALADCSPLANNGEGALLPDLADIQQVSKRIALEVGKAAQLQGAAVVTSSDALQKAIEHNFWQPQYRSYKRTSF</sequence>
<comment type="catalytic activity">
    <reaction evidence="1">
        <text>(S)-malate + NAD(+) = pyruvate + CO2 + NADH</text>
        <dbReference type="Rhea" id="RHEA:12653"/>
        <dbReference type="ChEBI" id="CHEBI:15361"/>
        <dbReference type="ChEBI" id="CHEBI:15589"/>
        <dbReference type="ChEBI" id="CHEBI:16526"/>
        <dbReference type="ChEBI" id="CHEBI:57540"/>
        <dbReference type="ChEBI" id="CHEBI:57945"/>
        <dbReference type="EC" id="1.1.1.38"/>
    </reaction>
</comment>
<comment type="catalytic activity">
    <reaction evidence="1">
        <text>oxaloacetate + H(+) = pyruvate + CO2</text>
        <dbReference type="Rhea" id="RHEA:15641"/>
        <dbReference type="ChEBI" id="CHEBI:15361"/>
        <dbReference type="ChEBI" id="CHEBI:15378"/>
        <dbReference type="ChEBI" id="CHEBI:16452"/>
        <dbReference type="ChEBI" id="CHEBI:16526"/>
        <dbReference type="EC" id="1.1.1.38"/>
    </reaction>
</comment>
<comment type="cofactor">
    <cofactor evidence="1">
        <name>Mg(2+)</name>
        <dbReference type="ChEBI" id="CHEBI:18420"/>
    </cofactor>
    <cofactor evidence="1">
        <name>Mn(2+)</name>
        <dbReference type="ChEBI" id="CHEBI:29035"/>
    </cofactor>
    <text evidence="1">Divalent metal cations. Prefers magnesium or manganese.</text>
</comment>
<comment type="subunit">
    <text evidence="1">Homotetramer.</text>
</comment>
<comment type="similarity">
    <text evidence="1">Belongs to the malic enzymes family.</text>
</comment>
<keyword id="KW-0479">Metal-binding</keyword>
<keyword id="KW-0520">NAD</keyword>
<keyword id="KW-0560">Oxidoreductase</keyword>
<name>MAO1_PECCP</name>
<dbReference type="EC" id="1.1.1.38" evidence="1"/>
<dbReference type="EMBL" id="CP001657">
    <property type="protein sequence ID" value="ACT12538.1"/>
    <property type="molecule type" value="Genomic_DNA"/>
</dbReference>
<dbReference type="RefSeq" id="WP_015839764.1">
    <property type="nucleotide sequence ID" value="NC_012917.1"/>
</dbReference>
<dbReference type="SMR" id="C6DDS6"/>
<dbReference type="STRING" id="561230.PC1_1494"/>
<dbReference type="KEGG" id="pct:PC1_1494"/>
<dbReference type="eggNOG" id="COG0281">
    <property type="taxonomic scope" value="Bacteria"/>
</dbReference>
<dbReference type="HOGENOM" id="CLU_011405_5_2_6"/>
<dbReference type="OrthoDB" id="3314528at2"/>
<dbReference type="Proteomes" id="UP000002736">
    <property type="component" value="Chromosome"/>
</dbReference>
<dbReference type="GO" id="GO:0005829">
    <property type="term" value="C:cytosol"/>
    <property type="evidence" value="ECO:0007669"/>
    <property type="project" value="TreeGrafter"/>
</dbReference>
<dbReference type="GO" id="GO:0004471">
    <property type="term" value="F:malate dehydrogenase (decarboxylating) (NAD+) activity"/>
    <property type="evidence" value="ECO:0007669"/>
    <property type="project" value="UniProtKB-UniRule"/>
</dbReference>
<dbReference type="GO" id="GO:0046872">
    <property type="term" value="F:metal ion binding"/>
    <property type="evidence" value="ECO:0007669"/>
    <property type="project" value="UniProtKB-KW"/>
</dbReference>
<dbReference type="GO" id="GO:0051287">
    <property type="term" value="F:NAD binding"/>
    <property type="evidence" value="ECO:0007669"/>
    <property type="project" value="InterPro"/>
</dbReference>
<dbReference type="GO" id="GO:0008948">
    <property type="term" value="F:oxaloacetate decarboxylase activity"/>
    <property type="evidence" value="ECO:0007669"/>
    <property type="project" value="UniProtKB-UniRule"/>
</dbReference>
<dbReference type="GO" id="GO:0006108">
    <property type="term" value="P:malate metabolic process"/>
    <property type="evidence" value="ECO:0007669"/>
    <property type="project" value="TreeGrafter"/>
</dbReference>
<dbReference type="CDD" id="cd05312">
    <property type="entry name" value="NAD_bind_1_malic_enz"/>
    <property type="match status" value="1"/>
</dbReference>
<dbReference type="FunFam" id="3.40.50.10380:FF:000001">
    <property type="entry name" value="NAD-dependent malic enzyme"/>
    <property type="match status" value="1"/>
</dbReference>
<dbReference type="FunFam" id="3.40.50.720:FF:000055">
    <property type="entry name" value="NAD-dependent malic enzyme"/>
    <property type="match status" value="1"/>
</dbReference>
<dbReference type="Gene3D" id="3.40.50.10380">
    <property type="entry name" value="Malic enzyme, N-terminal domain"/>
    <property type="match status" value="1"/>
</dbReference>
<dbReference type="Gene3D" id="3.40.50.720">
    <property type="entry name" value="NAD(P)-binding Rossmann-like Domain"/>
    <property type="match status" value="1"/>
</dbReference>
<dbReference type="HAMAP" id="MF_01619">
    <property type="entry name" value="NAD_malic_enz"/>
    <property type="match status" value="1"/>
</dbReference>
<dbReference type="InterPro" id="IPR046346">
    <property type="entry name" value="Aminoacid_DH-like_N_sf"/>
</dbReference>
<dbReference type="InterPro" id="IPR015884">
    <property type="entry name" value="Malic_enzyme_CS"/>
</dbReference>
<dbReference type="InterPro" id="IPR012301">
    <property type="entry name" value="Malic_N_dom"/>
</dbReference>
<dbReference type="InterPro" id="IPR037062">
    <property type="entry name" value="Malic_N_dom_sf"/>
</dbReference>
<dbReference type="InterPro" id="IPR012302">
    <property type="entry name" value="Malic_NAD-bd"/>
</dbReference>
<dbReference type="InterPro" id="IPR001891">
    <property type="entry name" value="Malic_OxRdtase"/>
</dbReference>
<dbReference type="InterPro" id="IPR036291">
    <property type="entry name" value="NAD(P)-bd_dom_sf"/>
</dbReference>
<dbReference type="InterPro" id="IPR023667">
    <property type="entry name" value="NAD_malic_enz_proteobac"/>
</dbReference>
<dbReference type="NCBIfam" id="NF010052">
    <property type="entry name" value="PRK13529.1"/>
    <property type="match status" value="1"/>
</dbReference>
<dbReference type="PANTHER" id="PTHR23406">
    <property type="entry name" value="MALIC ENZYME-RELATED"/>
    <property type="match status" value="1"/>
</dbReference>
<dbReference type="PANTHER" id="PTHR23406:SF34">
    <property type="entry name" value="NAD-DEPENDENT MALIC ENZYME, MITOCHONDRIAL"/>
    <property type="match status" value="1"/>
</dbReference>
<dbReference type="Pfam" id="PF00390">
    <property type="entry name" value="malic"/>
    <property type="match status" value="1"/>
</dbReference>
<dbReference type="Pfam" id="PF03949">
    <property type="entry name" value="Malic_M"/>
    <property type="match status" value="1"/>
</dbReference>
<dbReference type="PIRSF" id="PIRSF000106">
    <property type="entry name" value="ME"/>
    <property type="match status" value="1"/>
</dbReference>
<dbReference type="PRINTS" id="PR00072">
    <property type="entry name" value="MALOXRDTASE"/>
</dbReference>
<dbReference type="SMART" id="SM01274">
    <property type="entry name" value="malic"/>
    <property type="match status" value="1"/>
</dbReference>
<dbReference type="SMART" id="SM00919">
    <property type="entry name" value="Malic_M"/>
    <property type="match status" value="1"/>
</dbReference>
<dbReference type="SUPFAM" id="SSF53223">
    <property type="entry name" value="Aminoacid dehydrogenase-like, N-terminal domain"/>
    <property type="match status" value="1"/>
</dbReference>
<dbReference type="SUPFAM" id="SSF51735">
    <property type="entry name" value="NAD(P)-binding Rossmann-fold domains"/>
    <property type="match status" value="1"/>
</dbReference>
<dbReference type="PROSITE" id="PS00331">
    <property type="entry name" value="MALIC_ENZYMES"/>
    <property type="match status" value="1"/>
</dbReference>
<feature type="chain" id="PRO_1000215736" description="NAD-dependent malic enzyme">
    <location>
        <begin position="1"/>
        <end position="565"/>
    </location>
</feature>
<feature type="active site" description="Proton donor" evidence="1">
    <location>
        <position position="104"/>
    </location>
</feature>
<feature type="active site" description="Proton acceptor" evidence="1">
    <location>
        <position position="175"/>
    </location>
</feature>
<feature type="binding site" evidence="1">
    <location>
        <position position="157"/>
    </location>
    <ligand>
        <name>NAD(+)</name>
        <dbReference type="ChEBI" id="CHEBI:57540"/>
    </ligand>
</feature>
<feature type="binding site" evidence="1">
    <location>
        <position position="246"/>
    </location>
    <ligand>
        <name>a divalent metal cation</name>
        <dbReference type="ChEBI" id="CHEBI:60240"/>
    </ligand>
</feature>
<feature type="binding site" evidence="1">
    <location>
        <position position="247"/>
    </location>
    <ligand>
        <name>a divalent metal cation</name>
        <dbReference type="ChEBI" id="CHEBI:60240"/>
    </ligand>
</feature>
<feature type="binding site" evidence="1">
    <location>
        <position position="270"/>
    </location>
    <ligand>
        <name>a divalent metal cation</name>
        <dbReference type="ChEBI" id="CHEBI:60240"/>
    </ligand>
</feature>
<feature type="binding site" evidence="1">
    <location>
        <position position="270"/>
    </location>
    <ligand>
        <name>NAD(+)</name>
        <dbReference type="ChEBI" id="CHEBI:57540"/>
    </ligand>
</feature>
<feature type="binding site" evidence="1">
    <location>
        <position position="418"/>
    </location>
    <ligand>
        <name>NAD(+)</name>
        <dbReference type="ChEBI" id="CHEBI:57540"/>
    </ligand>
</feature>
<feature type="site" description="Important for activity" evidence="1">
    <location>
        <position position="270"/>
    </location>
</feature>